<sequence>MDLKKTVLCESLIIWLQTFKTAAPCKTVEDLTSGAAMSQALHQIDPSWFSESWLARIKEDVGDNVRLKMNNLKKILQMIVDYYNEVLAQQMSDFPLPDLMRVVEQSDQVELGRLLQLILGCAVKCDRKQEYIQIIMTLEESVQHVVMTAIQELMSRESVSQLGAEPAGDTEQQLKKALEDLTEVMAEKEELAQRCQELDMQVTVLQEERNSLLAENDLLTDRSSQLETFDDPSTPSGRKHSQLQFQLEQLQEENFRLEAAKDDYRIHCEELEKQLVELQHRNDELTSLAEESRSLKDELDILRSCSDRAVKLEASVETYRKKLEDLSDLRRQMKALEEKNMTYMHNTVSLEEELRKANAARAQLETYKRQVQELHKKLSDESRRADNLVFEMKKLQEKYDALVKERERISIERDTLRETNEELRCTQAQQDQLLLAGKYQTGSPSHDNLAAEMLPIEYREKFIRLQHENKMLRLQQEESEKQRITELQQQLEEARRGRSQLDTDNRLNRERISELQQQVEDLQKALQTQGAKPDDSHLKRKLDAHMVQLNEAQDEIMKKKELLEDLQPDATQTSVKMDELMAALKKKDEDMRAMEDRYKMYLEKARDVIRALDPKLNPASAEIQSLKVQLSDKDKKIIALERECEQAKLREYEEKLIVTAWYNKSLNFQKMAIESRLSGRANSLVPPGQSFLAQQRQVTNARRTMSINVPASSSK</sequence>
<proteinExistence type="evidence at transcript level"/>
<dbReference type="EMBL" id="BX322665">
    <property type="protein sequence ID" value="CAH69008.1"/>
    <property type="molecule type" value="Genomic_DNA"/>
</dbReference>
<dbReference type="EMBL" id="BC163044">
    <property type="protein sequence ID" value="AAI63044.1"/>
    <property type="molecule type" value="mRNA"/>
</dbReference>
<dbReference type="RefSeq" id="NP_001038663.1">
    <property type="nucleotide sequence ID" value="NM_001045198.1"/>
</dbReference>
<dbReference type="SMR" id="Q5TZ80"/>
<dbReference type="FunCoup" id="Q5TZ80">
    <property type="interactions" value="1074"/>
</dbReference>
<dbReference type="STRING" id="7955.ENSDARP00000063051"/>
<dbReference type="PaxDb" id="7955-ENSDARP00000063051"/>
<dbReference type="Ensembl" id="ENSDART00000063052">
    <property type="protein sequence ID" value="ENSDARP00000063051"/>
    <property type="gene ID" value="ENSDARG00000042946"/>
</dbReference>
<dbReference type="GeneID" id="570393"/>
<dbReference type="KEGG" id="dre:570393"/>
<dbReference type="AGR" id="ZFIN:ZDB-GENE-041001-159"/>
<dbReference type="CTD" id="51361"/>
<dbReference type="ZFIN" id="ZDB-GENE-041001-159">
    <property type="gene designation" value="hook1"/>
</dbReference>
<dbReference type="eggNOG" id="ENOG502QQM8">
    <property type="taxonomic scope" value="Eukaryota"/>
</dbReference>
<dbReference type="HOGENOM" id="CLU_011214_1_0_1"/>
<dbReference type="InParanoid" id="Q5TZ80"/>
<dbReference type="OMA" id="TYKKQVQ"/>
<dbReference type="OrthoDB" id="49395at2759"/>
<dbReference type="PhylomeDB" id="Q5TZ80"/>
<dbReference type="TreeFam" id="TF320231"/>
<dbReference type="PRO" id="PR:Q5TZ80"/>
<dbReference type="Proteomes" id="UP000000437">
    <property type="component" value="Chromosome 20"/>
</dbReference>
<dbReference type="Bgee" id="ENSDARG00000042946">
    <property type="expression patterns" value="Expressed in retina and 18 other cell types or tissues"/>
</dbReference>
<dbReference type="ExpressionAtlas" id="Q5TZ80">
    <property type="expression patterns" value="baseline"/>
</dbReference>
<dbReference type="GO" id="GO:0005813">
    <property type="term" value="C:centrosome"/>
    <property type="evidence" value="ECO:0000318"/>
    <property type="project" value="GO_Central"/>
</dbReference>
<dbReference type="GO" id="GO:0005737">
    <property type="term" value="C:cytoplasm"/>
    <property type="evidence" value="ECO:0000318"/>
    <property type="project" value="GO_Central"/>
</dbReference>
<dbReference type="GO" id="GO:0070695">
    <property type="term" value="C:FHF complex"/>
    <property type="evidence" value="ECO:0000250"/>
    <property type="project" value="UniProtKB"/>
</dbReference>
<dbReference type="GO" id="GO:0005874">
    <property type="term" value="C:microtubule"/>
    <property type="evidence" value="ECO:0007669"/>
    <property type="project" value="UniProtKB-KW"/>
</dbReference>
<dbReference type="GO" id="GO:0051959">
    <property type="term" value="F:dynein light intermediate chain binding"/>
    <property type="evidence" value="ECO:0000318"/>
    <property type="project" value="GO_Central"/>
</dbReference>
<dbReference type="GO" id="GO:0008017">
    <property type="term" value="F:microtubule binding"/>
    <property type="evidence" value="ECO:0000318"/>
    <property type="project" value="GO_Central"/>
</dbReference>
<dbReference type="GO" id="GO:0031122">
    <property type="term" value="P:cytoplasmic microtubule organization"/>
    <property type="evidence" value="ECO:0000318"/>
    <property type="project" value="GO_Central"/>
</dbReference>
<dbReference type="GO" id="GO:0030705">
    <property type="term" value="P:cytoskeleton-dependent intracellular transport"/>
    <property type="evidence" value="ECO:0000318"/>
    <property type="project" value="GO_Central"/>
</dbReference>
<dbReference type="GO" id="GO:0045022">
    <property type="term" value="P:early endosome to late endosome transport"/>
    <property type="evidence" value="ECO:0000250"/>
    <property type="project" value="UniProtKB"/>
</dbReference>
<dbReference type="GO" id="GO:0007032">
    <property type="term" value="P:endosome organization"/>
    <property type="evidence" value="ECO:0000250"/>
    <property type="project" value="UniProtKB"/>
</dbReference>
<dbReference type="GO" id="GO:0008333">
    <property type="term" value="P:endosome to lysosome transport"/>
    <property type="evidence" value="ECO:0000250"/>
    <property type="project" value="UniProtKB"/>
</dbReference>
<dbReference type="GO" id="GO:0007040">
    <property type="term" value="P:lysosome organization"/>
    <property type="evidence" value="ECO:0000250"/>
    <property type="project" value="UniProtKB"/>
</dbReference>
<dbReference type="GO" id="GO:0015031">
    <property type="term" value="P:protein transport"/>
    <property type="evidence" value="ECO:0007669"/>
    <property type="project" value="UniProtKB-KW"/>
</dbReference>
<dbReference type="CDD" id="cd22225">
    <property type="entry name" value="HkD_Hook1"/>
    <property type="match status" value="1"/>
</dbReference>
<dbReference type="FunFam" id="1.10.418.10:FF:000024">
    <property type="entry name" value="Hook homolog 3 (Drosophila)"/>
    <property type="match status" value="1"/>
</dbReference>
<dbReference type="FunFam" id="1.10.287.1490:FF:000091">
    <property type="entry name" value="Uncharacterized protein"/>
    <property type="match status" value="1"/>
</dbReference>
<dbReference type="Gene3D" id="1.10.418.10">
    <property type="entry name" value="Calponin-like domain"/>
    <property type="match status" value="1"/>
</dbReference>
<dbReference type="InterPro" id="IPR001715">
    <property type="entry name" value="CH_dom"/>
</dbReference>
<dbReference type="InterPro" id="IPR036872">
    <property type="entry name" value="CH_dom_sf"/>
</dbReference>
<dbReference type="InterPro" id="IPR008636">
    <property type="entry name" value="Hook_C"/>
</dbReference>
<dbReference type="InterPro" id="IPR043936">
    <property type="entry name" value="HOOK_N"/>
</dbReference>
<dbReference type="PANTHER" id="PTHR18947">
    <property type="entry name" value="HOOK PROTEINS"/>
    <property type="match status" value="1"/>
</dbReference>
<dbReference type="PANTHER" id="PTHR18947:SF36">
    <property type="entry name" value="PROTEIN HOOK HOMOLOG 1"/>
    <property type="match status" value="1"/>
</dbReference>
<dbReference type="Pfam" id="PF05622">
    <property type="entry name" value="HOOK"/>
    <property type="match status" value="1"/>
</dbReference>
<dbReference type="Pfam" id="PF19047">
    <property type="entry name" value="HOOK_N"/>
    <property type="match status" value="1"/>
</dbReference>
<dbReference type="SUPFAM" id="SSF116907">
    <property type="entry name" value="Hook domain"/>
    <property type="match status" value="1"/>
</dbReference>
<dbReference type="PROSITE" id="PS50021">
    <property type="entry name" value="CH"/>
    <property type="match status" value="1"/>
</dbReference>
<protein>
    <recommendedName>
        <fullName>Protein Hook homolog 1</fullName>
    </recommendedName>
</protein>
<gene>
    <name type="primary">hook1</name>
    <name type="ORF">si:dkey-183n20.14</name>
</gene>
<organism>
    <name type="scientific">Danio rerio</name>
    <name type="common">Zebrafish</name>
    <name type="synonym">Brachydanio rerio</name>
    <dbReference type="NCBI Taxonomy" id="7955"/>
    <lineage>
        <taxon>Eukaryota</taxon>
        <taxon>Metazoa</taxon>
        <taxon>Chordata</taxon>
        <taxon>Craniata</taxon>
        <taxon>Vertebrata</taxon>
        <taxon>Euteleostomi</taxon>
        <taxon>Actinopterygii</taxon>
        <taxon>Neopterygii</taxon>
        <taxon>Teleostei</taxon>
        <taxon>Ostariophysi</taxon>
        <taxon>Cypriniformes</taxon>
        <taxon>Danionidae</taxon>
        <taxon>Danioninae</taxon>
        <taxon>Danio</taxon>
    </lineage>
</organism>
<feature type="chain" id="PRO_0000379054" description="Protein Hook homolog 1">
    <location>
        <begin position="1"/>
        <end position="715"/>
    </location>
</feature>
<feature type="domain" description="Calponin-homology (CH)" evidence="3">
    <location>
        <begin position="6"/>
        <end position="122"/>
    </location>
</feature>
<feature type="coiled-coil region" evidence="2">
    <location>
        <begin position="167"/>
        <end position="434"/>
    </location>
</feature>
<feature type="coiled-coil region" evidence="2">
    <location>
        <begin position="463"/>
        <end position="656"/>
    </location>
</feature>
<feature type="sequence conflict" description="In Ref. 2; AAI63044." evidence="4" ref="2">
    <original>I</original>
    <variation>F</variation>
    <location>
        <position position="411"/>
    </location>
</feature>
<feature type="sequence conflict" description="In Ref. 2; AAI63044." evidence="4" ref="2">
    <original>A</original>
    <variation>P</variation>
    <location>
        <position position="605"/>
    </location>
</feature>
<reference key="1">
    <citation type="journal article" date="2013" name="Nature">
        <title>The zebrafish reference genome sequence and its relationship to the human genome.</title>
        <authorList>
            <person name="Howe K."/>
            <person name="Clark M.D."/>
            <person name="Torroja C.F."/>
            <person name="Torrance J."/>
            <person name="Berthelot C."/>
            <person name="Muffato M."/>
            <person name="Collins J.E."/>
            <person name="Humphray S."/>
            <person name="McLaren K."/>
            <person name="Matthews L."/>
            <person name="McLaren S."/>
            <person name="Sealy I."/>
            <person name="Caccamo M."/>
            <person name="Churcher C."/>
            <person name="Scott C."/>
            <person name="Barrett J.C."/>
            <person name="Koch R."/>
            <person name="Rauch G.J."/>
            <person name="White S."/>
            <person name="Chow W."/>
            <person name="Kilian B."/>
            <person name="Quintais L.T."/>
            <person name="Guerra-Assuncao J.A."/>
            <person name="Zhou Y."/>
            <person name="Gu Y."/>
            <person name="Yen J."/>
            <person name="Vogel J.H."/>
            <person name="Eyre T."/>
            <person name="Redmond S."/>
            <person name="Banerjee R."/>
            <person name="Chi J."/>
            <person name="Fu B."/>
            <person name="Langley E."/>
            <person name="Maguire S.F."/>
            <person name="Laird G.K."/>
            <person name="Lloyd D."/>
            <person name="Kenyon E."/>
            <person name="Donaldson S."/>
            <person name="Sehra H."/>
            <person name="Almeida-King J."/>
            <person name="Loveland J."/>
            <person name="Trevanion S."/>
            <person name="Jones M."/>
            <person name="Quail M."/>
            <person name="Willey D."/>
            <person name="Hunt A."/>
            <person name="Burton J."/>
            <person name="Sims S."/>
            <person name="McLay K."/>
            <person name="Plumb B."/>
            <person name="Davis J."/>
            <person name="Clee C."/>
            <person name="Oliver K."/>
            <person name="Clark R."/>
            <person name="Riddle C."/>
            <person name="Elliot D."/>
            <person name="Threadgold G."/>
            <person name="Harden G."/>
            <person name="Ware D."/>
            <person name="Begum S."/>
            <person name="Mortimore B."/>
            <person name="Kerry G."/>
            <person name="Heath P."/>
            <person name="Phillimore B."/>
            <person name="Tracey A."/>
            <person name="Corby N."/>
            <person name="Dunn M."/>
            <person name="Johnson C."/>
            <person name="Wood J."/>
            <person name="Clark S."/>
            <person name="Pelan S."/>
            <person name="Griffiths G."/>
            <person name="Smith M."/>
            <person name="Glithero R."/>
            <person name="Howden P."/>
            <person name="Barker N."/>
            <person name="Lloyd C."/>
            <person name="Stevens C."/>
            <person name="Harley J."/>
            <person name="Holt K."/>
            <person name="Panagiotidis G."/>
            <person name="Lovell J."/>
            <person name="Beasley H."/>
            <person name="Henderson C."/>
            <person name="Gordon D."/>
            <person name="Auger K."/>
            <person name="Wright D."/>
            <person name="Collins J."/>
            <person name="Raisen C."/>
            <person name="Dyer L."/>
            <person name="Leung K."/>
            <person name="Robertson L."/>
            <person name="Ambridge K."/>
            <person name="Leongamornlert D."/>
            <person name="McGuire S."/>
            <person name="Gilderthorp R."/>
            <person name="Griffiths C."/>
            <person name="Manthravadi D."/>
            <person name="Nichol S."/>
            <person name="Barker G."/>
            <person name="Whitehead S."/>
            <person name="Kay M."/>
            <person name="Brown J."/>
            <person name="Murnane C."/>
            <person name="Gray E."/>
            <person name="Humphries M."/>
            <person name="Sycamore N."/>
            <person name="Barker D."/>
            <person name="Saunders D."/>
            <person name="Wallis J."/>
            <person name="Babbage A."/>
            <person name="Hammond S."/>
            <person name="Mashreghi-Mohammadi M."/>
            <person name="Barr L."/>
            <person name="Martin S."/>
            <person name="Wray P."/>
            <person name="Ellington A."/>
            <person name="Matthews N."/>
            <person name="Ellwood M."/>
            <person name="Woodmansey R."/>
            <person name="Clark G."/>
            <person name="Cooper J."/>
            <person name="Tromans A."/>
            <person name="Grafham D."/>
            <person name="Skuce C."/>
            <person name="Pandian R."/>
            <person name="Andrews R."/>
            <person name="Harrison E."/>
            <person name="Kimberley A."/>
            <person name="Garnett J."/>
            <person name="Fosker N."/>
            <person name="Hall R."/>
            <person name="Garner P."/>
            <person name="Kelly D."/>
            <person name="Bird C."/>
            <person name="Palmer S."/>
            <person name="Gehring I."/>
            <person name="Berger A."/>
            <person name="Dooley C.M."/>
            <person name="Ersan-Urun Z."/>
            <person name="Eser C."/>
            <person name="Geiger H."/>
            <person name="Geisler M."/>
            <person name="Karotki L."/>
            <person name="Kirn A."/>
            <person name="Konantz J."/>
            <person name="Konantz M."/>
            <person name="Oberlander M."/>
            <person name="Rudolph-Geiger S."/>
            <person name="Teucke M."/>
            <person name="Lanz C."/>
            <person name="Raddatz G."/>
            <person name="Osoegawa K."/>
            <person name="Zhu B."/>
            <person name="Rapp A."/>
            <person name="Widaa S."/>
            <person name="Langford C."/>
            <person name="Yang F."/>
            <person name="Schuster S.C."/>
            <person name="Carter N.P."/>
            <person name="Harrow J."/>
            <person name="Ning Z."/>
            <person name="Herrero J."/>
            <person name="Searle S.M."/>
            <person name="Enright A."/>
            <person name="Geisler R."/>
            <person name="Plasterk R.H."/>
            <person name="Lee C."/>
            <person name="Westerfield M."/>
            <person name="de Jong P.J."/>
            <person name="Zon L.I."/>
            <person name="Postlethwait J.H."/>
            <person name="Nusslein-Volhard C."/>
            <person name="Hubbard T.J."/>
            <person name="Roest Crollius H."/>
            <person name="Rogers J."/>
            <person name="Stemple D.L."/>
        </authorList>
    </citation>
    <scope>NUCLEOTIDE SEQUENCE [LARGE SCALE GENOMIC DNA]</scope>
    <source>
        <strain>Tuebingen</strain>
    </source>
</reference>
<reference key="2">
    <citation type="submission" date="2008-04" db="EMBL/GenBank/DDBJ databases">
        <authorList>
            <consortium name="NIH - Zebrafish Gene Collection (ZGC) project"/>
        </authorList>
    </citation>
    <scope>NUCLEOTIDE SEQUENCE [LARGE SCALE MRNA]</scope>
</reference>
<keyword id="KW-0175">Coiled coil</keyword>
<keyword id="KW-0963">Cytoplasm</keyword>
<keyword id="KW-0206">Cytoskeleton</keyword>
<keyword id="KW-0493">Microtubule</keyword>
<keyword id="KW-0653">Protein transport</keyword>
<keyword id="KW-1185">Reference proteome</keyword>
<keyword id="KW-0813">Transport</keyword>
<accession>Q5TZ80</accession>
<accession>B3DI93</accession>
<comment type="function">
    <text evidence="1">May function to promote vesicle trafficking and/or fusion.</text>
</comment>
<comment type="subunit">
    <text evidence="1">Interacts with microtubules.</text>
</comment>
<comment type="subcellular location">
    <subcellularLocation>
        <location evidence="1">Cytoplasm</location>
    </subcellularLocation>
    <subcellularLocation>
        <location evidence="1">Cytoplasm</location>
        <location evidence="1">Cytoskeleton</location>
    </subcellularLocation>
</comment>
<comment type="similarity">
    <text evidence="4">Belongs to the hook family.</text>
</comment>
<name>HOOK1_DANRE</name>
<evidence type="ECO:0000250" key="1"/>
<evidence type="ECO:0000255" key="2"/>
<evidence type="ECO:0000255" key="3">
    <source>
        <dbReference type="PROSITE-ProRule" id="PRU00044"/>
    </source>
</evidence>
<evidence type="ECO:0000305" key="4"/>